<accession>Q5FPB9</accession>
<proteinExistence type="inferred from homology"/>
<protein>
    <recommendedName>
        <fullName evidence="1">Acyl carrier protein</fullName>
        <shortName evidence="1">ACP</shortName>
    </recommendedName>
</protein>
<keyword id="KW-0963">Cytoplasm</keyword>
<keyword id="KW-0275">Fatty acid biosynthesis</keyword>
<keyword id="KW-0276">Fatty acid metabolism</keyword>
<keyword id="KW-0444">Lipid biosynthesis</keyword>
<keyword id="KW-0443">Lipid metabolism</keyword>
<keyword id="KW-0596">Phosphopantetheine</keyword>
<keyword id="KW-0597">Phosphoprotein</keyword>
<keyword id="KW-1185">Reference proteome</keyword>
<evidence type="ECO:0000255" key="1">
    <source>
        <dbReference type="HAMAP-Rule" id="MF_01217"/>
    </source>
</evidence>
<evidence type="ECO:0000255" key="2">
    <source>
        <dbReference type="PROSITE-ProRule" id="PRU00258"/>
    </source>
</evidence>
<feature type="chain" id="PRO_1000066613" description="Acyl carrier protein">
    <location>
        <begin position="1"/>
        <end position="79"/>
    </location>
</feature>
<feature type="domain" description="Carrier" evidence="2">
    <location>
        <begin position="2"/>
        <end position="77"/>
    </location>
</feature>
<feature type="modified residue" description="O-(pantetheine 4'-phosphoryl)serine" evidence="2">
    <location>
        <position position="37"/>
    </location>
</feature>
<gene>
    <name evidence="1" type="primary">acpP</name>
    <name type="ordered locus">GOX2041</name>
</gene>
<sequence length="79" mass="8570">MSDIADKVKKIVVEHLGVDESKVTPDASFIDDLGADSLDTVELVMAFEEAFSVEIPEDAAEKIATVKDAIDYIEKQKAA</sequence>
<dbReference type="EMBL" id="CP000009">
    <property type="protein sequence ID" value="AAW61777.1"/>
    <property type="molecule type" value="Genomic_DNA"/>
</dbReference>
<dbReference type="RefSeq" id="WP_011253554.1">
    <property type="nucleotide sequence ID" value="NZ_LT900338.1"/>
</dbReference>
<dbReference type="SMR" id="Q5FPB9"/>
<dbReference type="STRING" id="290633.GOX2041"/>
<dbReference type="KEGG" id="gox:GOX2041"/>
<dbReference type="eggNOG" id="COG0236">
    <property type="taxonomic scope" value="Bacteria"/>
</dbReference>
<dbReference type="HOGENOM" id="CLU_108696_5_1_5"/>
<dbReference type="UniPathway" id="UPA00094"/>
<dbReference type="Proteomes" id="UP000006375">
    <property type="component" value="Chromosome"/>
</dbReference>
<dbReference type="GO" id="GO:0005829">
    <property type="term" value="C:cytosol"/>
    <property type="evidence" value="ECO:0007669"/>
    <property type="project" value="TreeGrafter"/>
</dbReference>
<dbReference type="GO" id="GO:0016020">
    <property type="term" value="C:membrane"/>
    <property type="evidence" value="ECO:0007669"/>
    <property type="project" value="GOC"/>
</dbReference>
<dbReference type="GO" id="GO:0000035">
    <property type="term" value="F:acyl binding"/>
    <property type="evidence" value="ECO:0007669"/>
    <property type="project" value="TreeGrafter"/>
</dbReference>
<dbReference type="GO" id="GO:0000036">
    <property type="term" value="F:acyl carrier activity"/>
    <property type="evidence" value="ECO:0007669"/>
    <property type="project" value="UniProtKB-UniRule"/>
</dbReference>
<dbReference type="GO" id="GO:0009245">
    <property type="term" value="P:lipid A biosynthetic process"/>
    <property type="evidence" value="ECO:0007669"/>
    <property type="project" value="TreeGrafter"/>
</dbReference>
<dbReference type="FunFam" id="1.10.1200.10:FF:000001">
    <property type="entry name" value="Acyl carrier protein"/>
    <property type="match status" value="1"/>
</dbReference>
<dbReference type="Gene3D" id="1.10.1200.10">
    <property type="entry name" value="ACP-like"/>
    <property type="match status" value="1"/>
</dbReference>
<dbReference type="HAMAP" id="MF_01217">
    <property type="entry name" value="Acyl_carrier"/>
    <property type="match status" value="1"/>
</dbReference>
<dbReference type="InterPro" id="IPR003231">
    <property type="entry name" value="ACP"/>
</dbReference>
<dbReference type="InterPro" id="IPR036736">
    <property type="entry name" value="ACP-like_sf"/>
</dbReference>
<dbReference type="InterPro" id="IPR009081">
    <property type="entry name" value="PP-bd_ACP"/>
</dbReference>
<dbReference type="InterPro" id="IPR006162">
    <property type="entry name" value="Ppantetheine_attach_site"/>
</dbReference>
<dbReference type="NCBIfam" id="TIGR00517">
    <property type="entry name" value="acyl_carrier"/>
    <property type="match status" value="1"/>
</dbReference>
<dbReference type="NCBIfam" id="NF002148">
    <property type="entry name" value="PRK00982.1-2"/>
    <property type="match status" value="1"/>
</dbReference>
<dbReference type="NCBIfam" id="NF002149">
    <property type="entry name" value="PRK00982.1-3"/>
    <property type="match status" value="1"/>
</dbReference>
<dbReference type="NCBIfam" id="NF002150">
    <property type="entry name" value="PRK00982.1-4"/>
    <property type="match status" value="1"/>
</dbReference>
<dbReference type="NCBIfam" id="NF002151">
    <property type="entry name" value="PRK00982.1-5"/>
    <property type="match status" value="1"/>
</dbReference>
<dbReference type="PANTHER" id="PTHR20863">
    <property type="entry name" value="ACYL CARRIER PROTEIN"/>
    <property type="match status" value="1"/>
</dbReference>
<dbReference type="PANTHER" id="PTHR20863:SF76">
    <property type="entry name" value="CARRIER DOMAIN-CONTAINING PROTEIN"/>
    <property type="match status" value="1"/>
</dbReference>
<dbReference type="Pfam" id="PF00550">
    <property type="entry name" value="PP-binding"/>
    <property type="match status" value="1"/>
</dbReference>
<dbReference type="SUPFAM" id="SSF47336">
    <property type="entry name" value="ACP-like"/>
    <property type="match status" value="1"/>
</dbReference>
<dbReference type="PROSITE" id="PS50075">
    <property type="entry name" value="CARRIER"/>
    <property type="match status" value="1"/>
</dbReference>
<dbReference type="PROSITE" id="PS00012">
    <property type="entry name" value="PHOSPHOPANTETHEINE"/>
    <property type="match status" value="1"/>
</dbReference>
<comment type="function">
    <text evidence="1">Carrier of the growing fatty acid chain in fatty acid biosynthesis.</text>
</comment>
<comment type="pathway">
    <text evidence="1">Lipid metabolism; fatty acid biosynthesis.</text>
</comment>
<comment type="subcellular location">
    <subcellularLocation>
        <location evidence="1">Cytoplasm</location>
    </subcellularLocation>
</comment>
<comment type="PTM">
    <text evidence="1">4'-phosphopantetheine is transferred from CoA to a specific serine of apo-ACP by AcpS. This modification is essential for activity because fatty acids are bound in thioester linkage to the sulfhydryl of the prosthetic group.</text>
</comment>
<comment type="similarity">
    <text evidence="1">Belongs to the acyl carrier protein (ACP) family.</text>
</comment>
<name>ACP_GLUOX</name>
<organism>
    <name type="scientific">Gluconobacter oxydans (strain 621H)</name>
    <name type="common">Gluconobacter suboxydans</name>
    <dbReference type="NCBI Taxonomy" id="290633"/>
    <lineage>
        <taxon>Bacteria</taxon>
        <taxon>Pseudomonadati</taxon>
        <taxon>Pseudomonadota</taxon>
        <taxon>Alphaproteobacteria</taxon>
        <taxon>Acetobacterales</taxon>
        <taxon>Acetobacteraceae</taxon>
        <taxon>Gluconobacter</taxon>
    </lineage>
</organism>
<reference key="1">
    <citation type="journal article" date="2005" name="Nat. Biotechnol.">
        <title>Complete genome sequence of the acetic acid bacterium Gluconobacter oxydans.</title>
        <authorList>
            <person name="Prust C."/>
            <person name="Hoffmeister M."/>
            <person name="Liesegang H."/>
            <person name="Wiezer A."/>
            <person name="Fricke W.F."/>
            <person name="Ehrenreich A."/>
            <person name="Gottschalk G."/>
            <person name="Deppenmeier U."/>
        </authorList>
    </citation>
    <scope>NUCLEOTIDE SEQUENCE [LARGE SCALE GENOMIC DNA]</scope>
    <source>
        <strain>621H</strain>
    </source>
</reference>